<reference key="1">
    <citation type="submission" date="2004-11" db="EMBL/GenBank/DDBJ databases">
        <authorList>
            <consortium name="The German cDNA consortium"/>
        </authorList>
    </citation>
    <scope>NUCLEOTIDE SEQUENCE [LARGE SCALE MRNA] (ISOFORM 2)</scope>
    <source>
        <tissue>Brain cortex</tissue>
    </source>
</reference>
<proteinExistence type="evidence at transcript level"/>
<accession>Q5R930</accession>
<gene>
    <name type="primary">MSRB3</name>
</gene>
<dbReference type="EC" id="1.8.4.12" evidence="4"/>
<dbReference type="EC" id="1.8.4.14" evidence="4"/>
<dbReference type="EMBL" id="CR859566">
    <property type="protein sequence ID" value="CAH91730.1"/>
    <property type="molecule type" value="mRNA"/>
</dbReference>
<dbReference type="RefSeq" id="NP_001127455.1">
    <molecule id="Q5R930-2"/>
    <property type="nucleotide sequence ID" value="NM_001133983.1"/>
</dbReference>
<dbReference type="RefSeq" id="XP_009246258.1">
    <molecule id="Q5R930-2"/>
    <property type="nucleotide sequence ID" value="XM_009247983.3"/>
</dbReference>
<dbReference type="RefSeq" id="XP_009246259.1">
    <molecule id="Q5R930-2"/>
    <property type="nucleotide sequence ID" value="XM_009247984.4"/>
</dbReference>
<dbReference type="RefSeq" id="XP_063567719.1">
    <molecule id="Q5R930-2"/>
    <property type="nucleotide sequence ID" value="XM_063711649.1"/>
</dbReference>
<dbReference type="SMR" id="Q5R930"/>
<dbReference type="FunCoup" id="Q5R930">
    <property type="interactions" value="1831"/>
</dbReference>
<dbReference type="STRING" id="9601.ENSPPYP00000005393"/>
<dbReference type="Ensembl" id="ENSPPYT00000005603.3">
    <molecule id="Q5R930-2"/>
    <property type="protein sequence ID" value="ENSPPYP00000005393.2"/>
    <property type="gene ID" value="ENSPPYG00000004735.3"/>
</dbReference>
<dbReference type="Ensembl" id="ENSPPYT00000046850.1">
    <molecule id="Q5R930-1"/>
    <property type="protein sequence ID" value="ENSPPYP00000034077.1"/>
    <property type="gene ID" value="ENSPPYG00000004735.3"/>
</dbReference>
<dbReference type="GeneID" id="100174528"/>
<dbReference type="KEGG" id="pon:100174528"/>
<dbReference type="CTD" id="253827"/>
<dbReference type="eggNOG" id="KOG0856">
    <property type="taxonomic scope" value="Eukaryota"/>
</dbReference>
<dbReference type="GeneTree" id="ENSGT00940000155240"/>
<dbReference type="HOGENOM" id="CLU_031040_8_4_1"/>
<dbReference type="InParanoid" id="Q5R930"/>
<dbReference type="OMA" id="DEQWRAE"/>
<dbReference type="OrthoDB" id="44061at2759"/>
<dbReference type="TreeFam" id="TF329147"/>
<dbReference type="Proteomes" id="UP000001595">
    <property type="component" value="Chromosome 12"/>
</dbReference>
<dbReference type="GO" id="GO:0005783">
    <property type="term" value="C:endoplasmic reticulum"/>
    <property type="evidence" value="ECO:0007669"/>
    <property type="project" value="UniProtKB-SubCell"/>
</dbReference>
<dbReference type="GO" id="GO:0005739">
    <property type="term" value="C:mitochondrion"/>
    <property type="evidence" value="ECO:0007669"/>
    <property type="project" value="UniProtKB-SubCell"/>
</dbReference>
<dbReference type="GO" id="GO:0033745">
    <property type="term" value="F:L-methionine-(R)-S-oxide reductase activity"/>
    <property type="evidence" value="ECO:0007669"/>
    <property type="project" value="UniProtKB-EC"/>
</dbReference>
<dbReference type="GO" id="GO:0033743">
    <property type="term" value="F:peptide-methionine (R)-S-oxide reductase activity"/>
    <property type="evidence" value="ECO:0007669"/>
    <property type="project" value="UniProtKB-EC"/>
</dbReference>
<dbReference type="GO" id="GO:0008270">
    <property type="term" value="F:zinc ion binding"/>
    <property type="evidence" value="ECO:0007669"/>
    <property type="project" value="Ensembl"/>
</dbReference>
<dbReference type="GO" id="GO:0030091">
    <property type="term" value="P:protein repair"/>
    <property type="evidence" value="ECO:0007669"/>
    <property type="project" value="Ensembl"/>
</dbReference>
<dbReference type="GO" id="GO:0006979">
    <property type="term" value="P:response to oxidative stress"/>
    <property type="evidence" value="ECO:0007669"/>
    <property type="project" value="InterPro"/>
</dbReference>
<dbReference type="FunFam" id="2.170.150.20:FF:000004">
    <property type="entry name" value="Peptide-methionine (R)-S-oxide reductase"/>
    <property type="match status" value="1"/>
</dbReference>
<dbReference type="Gene3D" id="2.170.150.20">
    <property type="entry name" value="Peptide methionine sulfoxide reductase"/>
    <property type="match status" value="1"/>
</dbReference>
<dbReference type="HAMAP" id="MF_01400">
    <property type="entry name" value="MsrB"/>
    <property type="match status" value="1"/>
</dbReference>
<dbReference type="InterPro" id="IPR028427">
    <property type="entry name" value="Met_Sox_Rdtase_MsrB"/>
</dbReference>
<dbReference type="InterPro" id="IPR002579">
    <property type="entry name" value="Met_Sox_Rdtase_MsrB_dom"/>
</dbReference>
<dbReference type="InterPro" id="IPR011057">
    <property type="entry name" value="Mss4-like_sf"/>
</dbReference>
<dbReference type="NCBIfam" id="TIGR00357">
    <property type="entry name" value="peptide-methionine (R)-S-oxide reductase MsrB"/>
    <property type="match status" value="1"/>
</dbReference>
<dbReference type="PANTHER" id="PTHR10173">
    <property type="entry name" value="METHIONINE SULFOXIDE REDUCTASE"/>
    <property type="match status" value="1"/>
</dbReference>
<dbReference type="PANTHER" id="PTHR10173:SF56">
    <property type="entry name" value="METHIONINE-R-SULFOXIDE REDUCTASE B3"/>
    <property type="match status" value="1"/>
</dbReference>
<dbReference type="Pfam" id="PF01641">
    <property type="entry name" value="SelR"/>
    <property type="match status" value="1"/>
</dbReference>
<dbReference type="SUPFAM" id="SSF51316">
    <property type="entry name" value="Mss4-like"/>
    <property type="match status" value="1"/>
</dbReference>
<dbReference type="PROSITE" id="PS51790">
    <property type="entry name" value="MSRB"/>
    <property type="match status" value="1"/>
</dbReference>
<sequence length="190" mass="20489">MSPQRTLPRPLSLCLCLCLCLAAALGSAQSGSCRDKKNCKVVFSQQELRKRLTPLQYHVTQEKGTESAFEGEYTHHKDPGIYKCVVCGTPLFKSETKFDSGSGWPSFHDVISSEAITFTDDFSYGMHRVETSCSQCGAHLGHIFDDGPRPTGKRYCINSAALSFTPADSSGAAEGESGVASPAQADKAEL</sequence>
<feature type="signal peptide" evidence="5">
    <location>
        <begin position="1"/>
        <end position="28"/>
    </location>
</feature>
<feature type="chain" id="PRO_0000327242" description="Methionine-R-sulfoxide reductase B3">
    <location>
        <begin position="29"/>
        <end position="190"/>
    </location>
</feature>
<feature type="domain" description="MsrB" evidence="6">
    <location>
        <begin position="45"/>
        <end position="167"/>
    </location>
</feature>
<feature type="region of interest" description="Disordered" evidence="7">
    <location>
        <begin position="166"/>
        <end position="190"/>
    </location>
</feature>
<feature type="short sequence motif" description="Endoplasmic reticulum retention signal" evidence="1">
    <location>
        <begin position="187"/>
        <end position="190"/>
    </location>
</feature>
<feature type="active site" description="Nucleophile" evidence="6">
    <location>
        <position position="156"/>
    </location>
</feature>
<feature type="binding site" evidence="6">
    <location>
        <position position="84"/>
    </location>
    <ligand>
        <name>Zn(2+)</name>
        <dbReference type="ChEBI" id="CHEBI:29105"/>
    </ligand>
</feature>
<feature type="binding site" evidence="6">
    <location>
        <position position="87"/>
    </location>
    <ligand>
        <name>Zn(2+)</name>
        <dbReference type="ChEBI" id="CHEBI:29105"/>
    </ligand>
</feature>
<feature type="binding site" evidence="6">
    <location>
        <position position="133"/>
    </location>
    <ligand>
        <name>Zn(2+)</name>
        <dbReference type="ChEBI" id="CHEBI:29105"/>
    </ligand>
</feature>
<feature type="binding site" evidence="6">
    <location>
        <position position="136"/>
    </location>
    <ligand>
        <name>Zn(2+)</name>
        <dbReference type="ChEBI" id="CHEBI:29105"/>
    </ligand>
</feature>
<feature type="modified residue" description="N6-acetyllysine" evidence="2">
    <location>
        <position position="40"/>
    </location>
</feature>
<feature type="modified residue" description="Phosphoserine" evidence="2">
    <location>
        <position position="181"/>
    </location>
</feature>
<feature type="splice variant" id="VSP_040884" description="In isoform 2." evidence="8">
    <original>MSPQRTLPRPLSLCLCLCLCLAAALGSAQ</original>
    <variation>MSAFNLLHLVTKSQPVALRACGLP</variation>
    <location>
        <begin position="1"/>
        <end position="29"/>
    </location>
</feature>
<organism>
    <name type="scientific">Pongo abelii</name>
    <name type="common">Sumatran orangutan</name>
    <name type="synonym">Pongo pygmaeus abelii</name>
    <dbReference type="NCBI Taxonomy" id="9601"/>
    <lineage>
        <taxon>Eukaryota</taxon>
        <taxon>Metazoa</taxon>
        <taxon>Chordata</taxon>
        <taxon>Craniata</taxon>
        <taxon>Vertebrata</taxon>
        <taxon>Euteleostomi</taxon>
        <taxon>Mammalia</taxon>
        <taxon>Eutheria</taxon>
        <taxon>Euarchontoglires</taxon>
        <taxon>Primates</taxon>
        <taxon>Haplorrhini</taxon>
        <taxon>Catarrhini</taxon>
        <taxon>Hominidae</taxon>
        <taxon>Pongo</taxon>
    </lineage>
</organism>
<protein>
    <recommendedName>
        <fullName>Methionine-R-sulfoxide reductase B3</fullName>
        <shortName>MsrB3</shortName>
        <ecNumber evidence="4">1.8.4.12</ecNumber>
        <ecNumber evidence="4">1.8.4.14</ecNumber>
    </recommendedName>
</protein>
<evidence type="ECO:0000250" key="1"/>
<evidence type="ECO:0000250" key="2">
    <source>
        <dbReference type="UniProtKB" id="Q8BU85"/>
    </source>
</evidence>
<evidence type="ECO:0000250" key="3">
    <source>
        <dbReference type="UniProtKB" id="Q8IXL7"/>
    </source>
</evidence>
<evidence type="ECO:0000250" key="4">
    <source>
        <dbReference type="UniProtKB" id="Q9JLC3"/>
    </source>
</evidence>
<evidence type="ECO:0000255" key="5"/>
<evidence type="ECO:0000255" key="6">
    <source>
        <dbReference type="PROSITE-ProRule" id="PRU01126"/>
    </source>
</evidence>
<evidence type="ECO:0000256" key="7">
    <source>
        <dbReference type="SAM" id="MobiDB-lite"/>
    </source>
</evidence>
<evidence type="ECO:0000303" key="8">
    <source ref="1"/>
</evidence>
<evidence type="ECO:0000305" key="9"/>
<comment type="function">
    <text evidence="3">Catalyzes the reduction of free and protein-bound methionine sulfoxide to methionine.</text>
</comment>
<comment type="catalytic activity">
    <reaction evidence="4">
        <text>L-methionyl-[protein] + [thioredoxin]-disulfide + H2O = L-methionyl-(R)-S-oxide-[protein] + [thioredoxin]-dithiol</text>
        <dbReference type="Rhea" id="RHEA:24164"/>
        <dbReference type="Rhea" id="RHEA-COMP:10698"/>
        <dbReference type="Rhea" id="RHEA-COMP:10700"/>
        <dbReference type="Rhea" id="RHEA-COMP:12313"/>
        <dbReference type="Rhea" id="RHEA-COMP:12314"/>
        <dbReference type="ChEBI" id="CHEBI:15377"/>
        <dbReference type="ChEBI" id="CHEBI:16044"/>
        <dbReference type="ChEBI" id="CHEBI:29950"/>
        <dbReference type="ChEBI" id="CHEBI:45764"/>
        <dbReference type="ChEBI" id="CHEBI:50058"/>
        <dbReference type="EC" id="1.8.4.12"/>
    </reaction>
</comment>
<comment type="catalytic activity">
    <reaction evidence="4">
        <text>[thioredoxin]-disulfide + L-methionine + H2O = L-methionine (R)-S-oxide + [thioredoxin]-dithiol</text>
        <dbReference type="Rhea" id="RHEA:21260"/>
        <dbReference type="Rhea" id="RHEA-COMP:10698"/>
        <dbReference type="Rhea" id="RHEA-COMP:10700"/>
        <dbReference type="ChEBI" id="CHEBI:15377"/>
        <dbReference type="ChEBI" id="CHEBI:29950"/>
        <dbReference type="ChEBI" id="CHEBI:50058"/>
        <dbReference type="ChEBI" id="CHEBI:57844"/>
        <dbReference type="ChEBI" id="CHEBI:58773"/>
        <dbReference type="EC" id="1.8.4.14"/>
    </reaction>
</comment>
<comment type="cofactor">
    <cofactor evidence="1">
        <name>Zn(2+)</name>
        <dbReference type="ChEBI" id="CHEBI:29105"/>
    </cofactor>
    <text evidence="1">Binds 1 zinc ion per subunit.</text>
</comment>
<comment type="subunit">
    <text evidence="1">Monomer.</text>
</comment>
<comment type="subcellular location">
    <molecule>Isoform 1</molecule>
    <subcellularLocation>
        <location evidence="1">Endoplasmic reticulum</location>
    </subcellularLocation>
</comment>
<comment type="subcellular location">
    <molecule>Isoform 2</molecule>
    <subcellularLocation>
        <location evidence="1">Mitochondrion</location>
    </subcellularLocation>
</comment>
<comment type="alternative products">
    <event type="alternative splicing"/>
    <isoform>
        <id>Q5R930-1</id>
        <name>1</name>
        <name>A</name>
        <sequence type="displayed"/>
    </isoform>
    <isoform>
        <id>Q5R930-2</id>
        <name>2</name>
        <name>B</name>
        <sequence type="described" ref="VSP_040884"/>
    </isoform>
</comment>
<comment type="miscellaneous">
    <molecule>Isoform 2</molecule>
    <text evidence="9">Has a transit peptide.</text>
</comment>
<comment type="similarity">
    <text evidence="9">Belongs to the MsrB Met sulfoxide reductase family.</text>
</comment>
<name>MSRB3_PONAB</name>
<keyword id="KW-0007">Acetylation</keyword>
<keyword id="KW-0025">Alternative splicing</keyword>
<keyword id="KW-0256">Endoplasmic reticulum</keyword>
<keyword id="KW-0479">Metal-binding</keyword>
<keyword id="KW-0496">Mitochondrion</keyword>
<keyword id="KW-0560">Oxidoreductase</keyword>
<keyword id="KW-0597">Phosphoprotein</keyword>
<keyword id="KW-1185">Reference proteome</keyword>
<keyword id="KW-0732">Signal</keyword>
<keyword id="KW-0862">Zinc</keyword>